<feature type="chain" id="PRO_0000269854" description="Transcriptional regulator QRICH1">
    <location>
        <begin position="1"/>
        <end position="777"/>
    </location>
</feature>
<feature type="domain" description="CARD" evidence="2">
    <location>
        <begin position="6"/>
        <end position="48"/>
    </location>
</feature>
<feature type="region of interest" description="Disordered" evidence="3">
    <location>
        <begin position="140"/>
        <end position="164"/>
    </location>
</feature>
<feature type="region of interest" description="Disordered" evidence="3">
    <location>
        <begin position="219"/>
        <end position="240"/>
    </location>
</feature>
<feature type="region of interest" description="Disordered" evidence="3">
    <location>
        <begin position="420"/>
        <end position="440"/>
    </location>
</feature>
<feature type="modified residue" description="N-acetylmethionine" evidence="1">
    <location>
        <position position="1"/>
    </location>
</feature>
<feature type="modified residue" description="Phosphoserine" evidence="1">
    <location>
        <position position="346"/>
    </location>
</feature>
<feature type="modified residue" description="Phosphoserine" evidence="1">
    <location>
        <position position="465"/>
    </location>
</feature>
<feature type="cross-link" description="Glycyl lysine isopeptide (Lys-Gly) (interchain with G-Cter in SUMO2)" evidence="1">
    <location>
        <position position="354"/>
    </location>
</feature>
<feature type="cross-link" description="Glycyl lysine isopeptide (Lys-Gly) (interchain with G-Cter in SUMO2)" evidence="1">
    <location>
        <position position="359"/>
    </location>
</feature>
<accession>Q3UA37</accession>
<name>QRIC1_MOUSE</name>
<comment type="function">
    <text evidence="1 4 5">Transcriptional regulator that acts as a mediator of the integrated stress response (ISR) through transcriptional control of protein homeostasis under conditions of ER stress (PubMed:33384352). Controls the outcome of the unfolded protein response (UPR), an ER-stress response pathway that either promotes recovery of ER homeostasis and cell survival, or triggers the terminal UPR which elicits programmed cell death when ER stress is prolonged and unresolved (PubMed:33384352). ER stress induces QRICH1 translation by a ribosome translation re-initiation mechanism in response to EIF2S1/eIF-2-alpha phosphorylation, and stress-induced QRICH1 regulates a transcriptional program associated with protein translation, protein secretion-mediated proteotoxicity and cell death during the terminal UPR (By similarity). May cooperate with ATF4 transcription factor signaling to regulate ER homeostasis which is critical for cell viability (By similarity). Up-regulates CASP3/caspase-3 activity in epithelial cells under ER stress. Central regulator of proteotoxicity associated with ER stress-mediated inflammatory diseases in the intestines and liver (PubMed:33384352). Involved in chondrocyte hypertrophy, a process required for normal longitudinal bone growth (PubMed:30281152).</text>
</comment>
<comment type="subcellular location">
    <subcellularLocation>
        <location evidence="1">Nucleus</location>
    </subcellularLocation>
    <subcellularLocation>
        <location evidence="1">Cytoplasm</location>
    </subcellularLocation>
    <subcellularLocation>
        <location evidence="1">Cell membrane</location>
    </subcellularLocation>
</comment>
<comment type="tissue specificity">
    <text evidence="4">Expressed highly in prefrontal cortex, craniofacial area and near the limbs of mouse embryos. Expressed in heart, skeletal muscle, liver, kidney, lung, brain, spleen, intestine and growth plate in mice.</text>
</comment>
<comment type="domain">
    <text evidence="1">The CARD domain may be involved in the regulation of caspase activity in the context of programmed cell death.</text>
</comment>
<keyword id="KW-0007">Acetylation</keyword>
<keyword id="KW-1003">Cell membrane</keyword>
<keyword id="KW-0963">Cytoplasm</keyword>
<keyword id="KW-1017">Isopeptide bond</keyword>
<keyword id="KW-0472">Membrane</keyword>
<keyword id="KW-0539">Nucleus</keyword>
<keyword id="KW-0597">Phosphoprotein</keyword>
<keyword id="KW-1185">Reference proteome</keyword>
<keyword id="KW-0804">Transcription</keyword>
<keyword id="KW-0805">Transcription regulation</keyword>
<keyword id="KW-0832">Ubl conjugation</keyword>
<keyword id="KW-0834">Unfolded protein response</keyword>
<reference key="1">
    <citation type="journal article" date="2005" name="Science">
        <title>The transcriptional landscape of the mammalian genome.</title>
        <authorList>
            <person name="Carninci P."/>
            <person name="Kasukawa T."/>
            <person name="Katayama S."/>
            <person name="Gough J."/>
            <person name="Frith M.C."/>
            <person name="Maeda N."/>
            <person name="Oyama R."/>
            <person name="Ravasi T."/>
            <person name="Lenhard B."/>
            <person name="Wells C."/>
            <person name="Kodzius R."/>
            <person name="Shimokawa K."/>
            <person name="Bajic V.B."/>
            <person name="Brenner S.E."/>
            <person name="Batalov S."/>
            <person name="Forrest A.R."/>
            <person name="Zavolan M."/>
            <person name="Davis M.J."/>
            <person name="Wilming L.G."/>
            <person name="Aidinis V."/>
            <person name="Allen J.E."/>
            <person name="Ambesi-Impiombato A."/>
            <person name="Apweiler R."/>
            <person name="Aturaliya R.N."/>
            <person name="Bailey T.L."/>
            <person name="Bansal M."/>
            <person name="Baxter L."/>
            <person name="Beisel K.W."/>
            <person name="Bersano T."/>
            <person name="Bono H."/>
            <person name="Chalk A.M."/>
            <person name="Chiu K.P."/>
            <person name="Choudhary V."/>
            <person name="Christoffels A."/>
            <person name="Clutterbuck D.R."/>
            <person name="Crowe M.L."/>
            <person name="Dalla E."/>
            <person name="Dalrymple B.P."/>
            <person name="de Bono B."/>
            <person name="Della Gatta G."/>
            <person name="di Bernardo D."/>
            <person name="Down T."/>
            <person name="Engstrom P."/>
            <person name="Fagiolini M."/>
            <person name="Faulkner G."/>
            <person name="Fletcher C.F."/>
            <person name="Fukushima T."/>
            <person name="Furuno M."/>
            <person name="Futaki S."/>
            <person name="Gariboldi M."/>
            <person name="Georgii-Hemming P."/>
            <person name="Gingeras T.R."/>
            <person name="Gojobori T."/>
            <person name="Green R.E."/>
            <person name="Gustincich S."/>
            <person name="Harbers M."/>
            <person name="Hayashi Y."/>
            <person name="Hensch T.K."/>
            <person name="Hirokawa N."/>
            <person name="Hill D."/>
            <person name="Huminiecki L."/>
            <person name="Iacono M."/>
            <person name="Ikeo K."/>
            <person name="Iwama A."/>
            <person name="Ishikawa T."/>
            <person name="Jakt M."/>
            <person name="Kanapin A."/>
            <person name="Katoh M."/>
            <person name="Kawasawa Y."/>
            <person name="Kelso J."/>
            <person name="Kitamura H."/>
            <person name="Kitano H."/>
            <person name="Kollias G."/>
            <person name="Krishnan S.P."/>
            <person name="Kruger A."/>
            <person name="Kummerfeld S.K."/>
            <person name="Kurochkin I.V."/>
            <person name="Lareau L.F."/>
            <person name="Lazarevic D."/>
            <person name="Lipovich L."/>
            <person name="Liu J."/>
            <person name="Liuni S."/>
            <person name="McWilliam S."/>
            <person name="Madan Babu M."/>
            <person name="Madera M."/>
            <person name="Marchionni L."/>
            <person name="Matsuda H."/>
            <person name="Matsuzawa S."/>
            <person name="Miki H."/>
            <person name="Mignone F."/>
            <person name="Miyake S."/>
            <person name="Morris K."/>
            <person name="Mottagui-Tabar S."/>
            <person name="Mulder N."/>
            <person name="Nakano N."/>
            <person name="Nakauchi H."/>
            <person name="Ng P."/>
            <person name="Nilsson R."/>
            <person name="Nishiguchi S."/>
            <person name="Nishikawa S."/>
            <person name="Nori F."/>
            <person name="Ohara O."/>
            <person name="Okazaki Y."/>
            <person name="Orlando V."/>
            <person name="Pang K.C."/>
            <person name="Pavan W.J."/>
            <person name="Pavesi G."/>
            <person name="Pesole G."/>
            <person name="Petrovsky N."/>
            <person name="Piazza S."/>
            <person name="Reed J."/>
            <person name="Reid J.F."/>
            <person name="Ring B.Z."/>
            <person name="Ringwald M."/>
            <person name="Rost B."/>
            <person name="Ruan Y."/>
            <person name="Salzberg S.L."/>
            <person name="Sandelin A."/>
            <person name="Schneider C."/>
            <person name="Schoenbach C."/>
            <person name="Sekiguchi K."/>
            <person name="Semple C.A."/>
            <person name="Seno S."/>
            <person name="Sessa L."/>
            <person name="Sheng Y."/>
            <person name="Shibata Y."/>
            <person name="Shimada H."/>
            <person name="Shimada K."/>
            <person name="Silva D."/>
            <person name="Sinclair B."/>
            <person name="Sperling S."/>
            <person name="Stupka E."/>
            <person name="Sugiura K."/>
            <person name="Sultana R."/>
            <person name="Takenaka Y."/>
            <person name="Taki K."/>
            <person name="Tammoja K."/>
            <person name="Tan S.L."/>
            <person name="Tang S."/>
            <person name="Taylor M.S."/>
            <person name="Tegner J."/>
            <person name="Teichmann S.A."/>
            <person name="Ueda H.R."/>
            <person name="van Nimwegen E."/>
            <person name="Verardo R."/>
            <person name="Wei C.L."/>
            <person name="Yagi K."/>
            <person name="Yamanishi H."/>
            <person name="Zabarovsky E."/>
            <person name="Zhu S."/>
            <person name="Zimmer A."/>
            <person name="Hide W."/>
            <person name="Bult C."/>
            <person name="Grimmond S.M."/>
            <person name="Teasdale R.D."/>
            <person name="Liu E.T."/>
            <person name="Brusic V."/>
            <person name="Quackenbush J."/>
            <person name="Wahlestedt C."/>
            <person name="Mattick J.S."/>
            <person name="Hume D.A."/>
            <person name="Kai C."/>
            <person name="Sasaki D."/>
            <person name="Tomaru Y."/>
            <person name="Fukuda S."/>
            <person name="Kanamori-Katayama M."/>
            <person name="Suzuki M."/>
            <person name="Aoki J."/>
            <person name="Arakawa T."/>
            <person name="Iida J."/>
            <person name="Imamura K."/>
            <person name="Itoh M."/>
            <person name="Kato T."/>
            <person name="Kawaji H."/>
            <person name="Kawagashira N."/>
            <person name="Kawashima T."/>
            <person name="Kojima M."/>
            <person name="Kondo S."/>
            <person name="Konno H."/>
            <person name="Nakano K."/>
            <person name="Ninomiya N."/>
            <person name="Nishio T."/>
            <person name="Okada M."/>
            <person name="Plessy C."/>
            <person name="Shibata K."/>
            <person name="Shiraki T."/>
            <person name="Suzuki S."/>
            <person name="Tagami M."/>
            <person name="Waki K."/>
            <person name="Watahiki A."/>
            <person name="Okamura-Oho Y."/>
            <person name="Suzuki H."/>
            <person name="Kawai J."/>
            <person name="Hayashizaki Y."/>
        </authorList>
    </citation>
    <scope>NUCLEOTIDE SEQUENCE [LARGE SCALE MRNA]</scope>
    <source>
        <strain>C57BL/6J</strain>
        <tissue>Bone marrow</tissue>
    </source>
</reference>
<reference key="2">
    <citation type="journal article" date="2010" name="Cell">
        <title>A tissue-specific atlas of mouse protein phosphorylation and expression.</title>
        <authorList>
            <person name="Huttlin E.L."/>
            <person name="Jedrychowski M.P."/>
            <person name="Elias J.E."/>
            <person name="Goswami T."/>
            <person name="Rad R."/>
            <person name="Beausoleil S.A."/>
            <person name="Villen J."/>
            <person name="Haas W."/>
            <person name="Sowa M.E."/>
            <person name="Gygi S.P."/>
        </authorList>
    </citation>
    <scope>IDENTIFICATION BY MASS SPECTROMETRY [LARGE SCALE ANALYSIS]</scope>
    <source>
        <tissue>Lung</tissue>
        <tissue>Pancreas</tissue>
        <tissue>Spleen</tissue>
        <tissue>Testis</tissue>
    </source>
</reference>
<reference key="3">
    <citation type="journal article" date="2019" name="Clin. Genet.">
        <title>QRICH1 mutations cause a chondrodysplasia with developmental delay.</title>
        <authorList>
            <person name="Lui J.C."/>
            <person name="Jee Y.H."/>
            <person name="Lee A."/>
            <person name="Yue S."/>
            <person name="Wagner J."/>
            <person name="Donnelly D.E."/>
            <person name="Vogt K.S."/>
            <person name="Baron J."/>
        </authorList>
    </citation>
    <scope>FUNCTION</scope>
    <scope>TISSUE SPECIFICITY</scope>
</reference>
<reference key="4">
    <citation type="journal article" date="2021" name="Science">
        <title>QRICH1 dictates the outcome of ER stress through transcriptional control of proteostasis.</title>
        <authorList>
            <person name="You K."/>
            <person name="Wang L."/>
            <person name="Chou C.H."/>
            <person name="Liu K."/>
            <person name="Nakata T."/>
            <person name="Jaiswal A."/>
            <person name="Yao J."/>
            <person name="Lefkovith A."/>
            <person name="Omar A."/>
            <person name="Perrigoue J.G."/>
            <person name="Towne J.E."/>
            <person name="Regev A."/>
            <person name="Graham D.B."/>
            <person name="Xavier R.J."/>
        </authorList>
    </citation>
    <scope>FUNCTION</scope>
    <scope>INDUCTION BY ER STRESS</scope>
    <scope>DOMAIN</scope>
</reference>
<dbReference type="EMBL" id="AK151491">
    <property type="protein sequence ID" value="BAE30444.1"/>
    <property type="molecule type" value="mRNA"/>
</dbReference>
<dbReference type="EMBL" id="AK151530">
    <property type="protein sequence ID" value="BAE30478.1"/>
    <property type="molecule type" value="mRNA"/>
</dbReference>
<dbReference type="CCDS" id="CCDS52927.1"/>
<dbReference type="RefSeq" id="NP_001107591.1">
    <property type="nucleotide sequence ID" value="NM_001114119.1"/>
</dbReference>
<dbReference type="RefSeq" id="NP_780352.2">
    <property type="nucleotide sequence ID" value="NM_175143.5"/>
</dbReference>
<dbReference type="SMR" id="Q3UA37"/>
<dbReference type="BioGRID" id="213306">
    <property type="interactions" value="3"/>
</dbReference>
<dbReference type="FunCoup" id="Q3UA37">
    <property type="interactions" value="4537"/>
</dbReference>
<dbReference type="IntAct" id="Q3UA37">
    <property type="interactions" value="2"/>
</dbReference>
<dbReference type="MINT" id="Q3UA37"/>
<dbReference type="STRING" id="10090.ENSMUSP00000006851"/>
<dbReference type="GlyGen" id="Q3UA37">
    <property type="glycosylation" value="2 sites, 1 O-linked glycan (2 sites)"/>
</dbReference>
<dbReference type="iPTMnet" id="Q3UA37"/>
<dbReference type="PhosphoSitePlus" id="Q3UA37"/>
<dbReference type="SwissPalm" id="Q3UA37"/>
<dbReference type="jPOST" id="Q3UA37"/>
<dbReference type="PaxDb" id="10090-ENSMUSP00000006851"/>
<dbReference type="PeptideAtlas" id="Q3UA37"/>
<dbReference type="ProteomicsDB" id="300368"/>
<dbReference type="Pumba" id="Q3UA37"/>
<dbReference type="DNASU" id="69232"/>
<dbReference type="GeneID" id="69232"/>
<dbReference type="KEGG" id="mmu:69232"/>
<dbReference type="AGR" id="MGI:1916482"/>
<dbReference type="CTD" id="54870"/>
<dbReference type="MGI" id="MGI:1916482">
    <property type="gene designation" value="Qrich1"/>
</dbReference>
<dbReference type="eggNOG" id="ENOG502QU8W">
    <property type="taxonomic scope" value="Eukaryota"/>
</dbReference>
<dbReference type="InParanoid" id="Q3UA37"/>
<dbReference type="OrthoDB" id="10025028at2759"/>
<dbReference type="PhylomeDB" id="Q3UA37"/>
<dbReference type="BioGRID-ORCS" id="69232">
    <property type="hits" value="11 hits in 76 CRISPR screens"/>
</dbReference>
<dbReference type="ChiTaRS" id="Qrich1">
    <property type="organism name" value="mouse"/>
</dbReference>
<dbReference type="PRO" id="PR:Q3UA37"/>
<dbReference type="Proteomes" id="UP000000589">
    <property type="component" value="Unplaced"/>
</dbReference>
<dbReference type="RNAct" id="Q3UA37">
    <property type="molecule type" value="protein"/>
</dbReference>
<dbReference type="GO" id="GO:0005737">
    <property type="term" value="C:cytoplasm"/>
    <property type="evidence" value="ECO:0007669"/>
    <property type="project" value="UniProtKB-SubCell"/>
</dbReference>
<dbReference type="GO" id="GO:0005634">
    <property type="term" value="C:nucleus"/>
    <property type="evidence" value="ECO:0000250"/>
    <property type="project" value="UniProtKB"/>
</dbReference>
<dbReference type="GO" id="GO:0005886">
    <property type="term" value="C:plasma membrane"/>
    <property type="evidence" value="ECO:0007669"/>
    <property type="project" value="UniProtKB-SubCell"/>
</dbReference>
<dbReference type="GO" id="GO:0003677">
    <property type="term" value="F:DNA binding"/>
    <property type="evidence" value="ECO:0000250"/>
    <property type="project" value="UniProtKB"/>
</dbReference>
<dbReference type="GO" id="GO:0030968">
    <property type="term" value="P:endoplasmic reticulum unfolded protein response"/>
    <property type="evidence" value="ECO:0000250"/>
    <property type="project" value="UniProtKB"/>
</dbReference>
<dbReference type="GO" id="GO:0140467">
    <property type="term" value="P:integrated stress response signaling"/>
    <property type="evidence" value="ECO:0000250"/>
    <property type="project" value="UniProtKB"/>
</dbReference>
<dbReference type="GO" id="GO:0070059">
    <property type="term" value="P:intrinsic apoptotic signaling pathway in response to endoplasmic reticulum stress"/>
    <property type="evidence" value="ECO:0000250"/>
    <property type="project" value="UniProtKB"/>
</dbReference>
<dbReference type="GO" id="GO:0001822">
    <property type="term" value="P:kidney development"/>
    <property type="evidence" value="ECO:0000315"/>
    <property type="project" value="MGI"/>
</dbReference>
<dbReference type="GO" id="GO:0036499">
    <property type="term" value="P:PERK-mediated unfolded protein response"/>
    <property type="evidence" value="ECO:0000250"/>
    <property type="project" value="UniProtKB"/>
</dbReference>
<dbReference type="GO" id="GO:0043065">
    <property type="term" value="P:positive regulation of apoptotic process"/>
    <property type="evidence" value="ECO:0000250"/>
    <property type="project" value="UniProtKB"/>
</dbReference>
<dbReference type="GO" id="GO:0045893">
    <property type="term" value="P:positive regulation of DNA-templated transcription"/>
    <property type="evidence" value="ECO:0000250"/>
    <property type="project" value="UniProtKB"/>
</dbReference>
<dbReference type="GO" id="GO:0034976">
    <property type="term" value="P:response to endoplasmic reticulum stress"/>
    <property type="evidence" value="ECO:0000314"/>
    <property type="project" value="UniProtKB"/>
</dbReference>
<dbReference type="CDD" id="cd01671">
    <property type="entry name" value="CARD"/>
    <property type="match status" value="1"/>
</dbReference>
<dbReference type="InterPro" id="IPR021893">
    <property type="entry name" value="DUF3504"/>
</dbReference>
<dbReference type="InterPro" id="IPR051284">
    <property type="entry name" value="ZnF_MYMT-QRICH1"/>
</dbReference>
<dbReference type="PANTHER" id="PTHR45736:SF8">
    <property type="entry name" value="TRANSCRIPTIONAL REGULATOR QRICH1"/>
    <property type="match status" value="1"/>
</dbReference>
<dbReference type="PANTHER" id="PTHR45736">
    <property type="entry name" value="ZINC FINGER MYM-TYPE PROTEIN"/>
    <property type="match status" value="1"/>
</dbReference>
<dbReference type="Pfam" id="PF12012">
    <property type="entry name" value="DUF3504"/>
    <property type="match status" value="1"/>
</dbReference>
<gene>
    <name evidence="7" type="primary">Qrich1</name>
</gene>
<sequence>MNNSLENTISFEEYIRVKARSVPQHRMKEFLDSLASKGPEALQEFQQTATTTMVYQQGGNCIYTDSTEVAGSLLELACPVTTSVQPQTQQEQQIQVQQPQQVQVQVQVQQSPQQVSAQQLSPQFTVHQPAEQPIQVQVQIQGQAPQSAAPSIQTPSLQSPSPSQLQAAQIQVQHVQAAQQIQAAEIPEEHIPHQQIQAQLVAGQSLAGGQQIQIQTVGALSPPPSQQGSPREGERRVGTASVLQPVKKRKVDMPITVSYAISGQPVATVLAIPQGQQQSYVSLRPDLLTVDSAHLYSATGTITSPTGETWTIPVYSAQPRGDPQQQSITHIAIPQEAYNAVHVSGSPKALAAVKLEDDKEKMVGTTSVVKNSHEEVVQTLANSLFPAQFMNGNIHIPVAVQAVAGTYQNTAQTVHIWDPQQQPQQQTAQEQTPPPQQQQQQLQVTCSAQTVQVAEVEPQSQPQPSPELLLPNSLKPEEGLEVWKNWAQTKNAELEKDAQNRLAPIGRRQLLRFQEDLISSAVAELNYGLCLMTREARNGEGEPYDPDVLYYIFLCIQKYLFENGRVDDIFSDLYYVRFTEWLHEVLKDVQPRVTPLGYVLPSHVTEEMLWECKQLGAHSPSTLLTTLMFFNTKYFLLKTVDQHMKLAFSKVLRQTKKSPSNPKDKSTSIRYLKALGIHQTGQKVTDDMYAEQTENPENPLRCPIKLYDFYLFKCPQSVKGRNDTFYLTPEPVVAPNSPIWYSVQPISREQMGQMLTRILVIREIQEAIAVANATTMH</sequence>
<organism>
    <name type="scientific">Mus musculus</name>
    <name type="common">Mouse</name>
    <dbReference type="NCBI Taxonomy" id="10090"/>
    <lineage>
        <taxon>Eukaryota</taxon>
        <taxon>Metazoa</taxon>
        <taxon>Chordata</taxon>
        <taxon>Craniata</taxon>
        <taxon>Vertebrata</taxon>
        <taxon>Euteleostomi</taxon>
        <taxon>Mammalia</taxon>
        <taxon>Eutheria</taxon>
        <taxon>Euarchontoglires</taxon>
        <taxon>Glires</taxon>
        <taxon>Rodentia</taxon>
        <taxon>Myomorpha</taxon>
        <taxon>Muroidea</taxon>
        <taxon>Muridae</taxon>
        <taxon>Murinae</taxon>
        <taxon>Mus</taxon>
        <taxon>Mus</taxon>
    </lineage>
</organism>
<evidence type="ECO:0000250" key="1">
    <source>
        <dbReference type="UniProtKB" id="Q2TAL8"/>
    </source>
</evidence>
<evidence type="ECO:0000255" key="2">
    <source>
        <dbReference type="PROSITE-ProRule" id="PRU00046"/>
    </source>
</evidence>
<evidence type="ECO:0000256" key="3">
    <source>
        <dbReference type="SAM" id="MobiDB-lite"/>
    </source>
</evidence>
<evidence type="ECO:0000269" key="4">
    <source>
    </source>
</evidence>
<evidence type="ECO:0000269" key="5">
    <source>
    </source>
</evidence>
<evidence type="ECO:0000305" key="6"/>
<evidence type="ECO:0000312" key="7">
    <source>
        <dbReference type="MGI" id="MGI:1916482"/>
    </source>
</evidence>
<protein>
    <recommendedName>
        <fullName evidence="6">Transcriptional regulator QRICH1</fullName>
    </recommendedName>
    <alternativeName>
        <fullName>Glutamine-rich protein 1</fullName>
    </alternativeName>
</protein>
<proteinExistence type="evidence at protein level"/>